<keyword id="KW-0325">Glycoprotein</keyword>
<keyword id="KW-1185">Reference proteome</keyword>
<keyword id="KW-0732">Signal</keyword>
<accession>Q196T8</accession>
<protein>
    <recommendedName>
        <fullName>Uncharacterized protein 122R</fullName>
    </recommendedName>
</protein>
<reference key="1">
    <citation type="journal article" date="2006" name="J. Virol.">
        <title>Genome of invertebrate iridescent virus type 3 (mosquito iridescent virus).</title>
        <authorList>
            <person name="Delhon G."/>
            <person name="Tulman E.R."/>
            <person name="Afonso C.L."/>
            <person name="Lu Z."/>
            <person name="Becnel J.J."/>
            <person name="Moser B.A."/>
            <person name="Kutish G.F."/>
            <person name="Rock D.L."/>
        </authorList>
    </citation>
    <scope>NUCLEOTIDE SEQUENCE [LARGE SCALE GENOMIC DNA]</scope>
</reference>
<gene>
    <name type="ORF">IIV3-122R</name>
</gene>
<sequence>MSHVSVIAARLLVWVGILLCLGVPQLWANPIYLYEPSANKSTRAPQVLGVPPEVYAFTVSCKACWLP</sequence>
<organism>
    <name type="scientific">Invertebrate iridescent virus 3</name>
    <name type="common">IIV-3</name>
    <name type="synonym">Mosquito iridescent virus</name>
    <dbReference type="NCBI Taxonomy" id="345201"/>
    <lineage>
        <taxon>Viruses</taxon>
        <taxon>Varidnaviria</taxon>
        <taxon>Bamfordvirae</taxon>
        <taxon>Nucleocytoviricota</taxon>
        <taxon>Megaviricetes</taxon>
        <taxon>Pimascovirales</taxon>
        <taxon>Iridoviridae</taxon>
        <taxon>Betairidovirinae</taxon>
        <taxon>Chloriridovirus</taxon>
    </lineage>
</organism>
<organismHost>
    <name type="scientific">Aedes vexans</name>
    <name type="common">Inland floodwater mosquito</name>
    <name type="synonym">Culex vexans</name>
    <dbReference type="NCBI Taxonomy" id="7163"/>
</organismHost>
<organismHost>
    <name type="scientific">Culex territans</name>
    <dbReference type="NCBI Taxonomy" id="42431"/>
</organismHost>
<organismHost>
    <name type="scientific">Culiseta annulata</name>
    <dbReference type="NCBI Taxonomy" id="332058"/>
</organismHost>
<organismHost>
    <name type="scientific">Ochlerotatus sollicitans</name>
    <name type="common">eastern saltmarsh mosquito</name>
    <dbReference type="NCBI Taxonomy" id="310513"/>
</organismHost>
<organismHost>
    <name type="scientific">Ochlerotatus taeniorhynchus</name>
    <name type="common">Black salt marsh mosquito</name>
    <name type="synonym">Aedes taeniorhynchus</name>
    <dbReference type="NCBI Taxonomy" id="329105"/>
</organismHost>
<organismHost>
    <name type="scientific">Psorophora ferox</name>
    <dbReference type="NCBI Taxonomy" id="7183"/>
</organismHost>
<feature type="signal peptide" evidence="1">
    <location>
        <begin position="1"/>
        <end position="28"/>
    </location>
</feature>
<feature type="chain" id="PRO_0000377819" description="Uncharacterized protein 122R">
    <location>
        <begin position="29"/>
        <end position="67"/>
    </location>
</feature>
<feature type="glycosylation site" description="N-linked (GlcNAc...) asparagine; by host" evidence="1">
    <location>
        <position position="39"/>
    </location>
</feature>
<evidence type="ECO:0000255" key="1"/>
<proteinExistence type="inferred from homology"/>
<dbReference type="EMBL" id="DQ643392">
    <property type="protein sequence ID" value="ABF82152.1"/>
    <property type="molecule type" value="Genomic_DNA"/>
</dbReference>
<dbReference type="RefSeq" id="YP_654694.1">
    <property type="nucleotide sequence ID" value="NC_008187.1"/>
</dbReference>
<dbReference type="SMR" id="Q196T8"/>
<dbReference type="KEGG" id="vg:4156333"/>
<dbReference type="Proteomes" id="UP000001358">
    <property type="component" value="Genome"/>
</dbReference>
<name>122R_IIV3</name>